<sequence>MASYKVTLINEEMGLNETIEVPDDEYILDVAEEEGIDLPYSCRAGACSTCAGKIKEGEIDQSDQSFLDDDQIEAGYVLTCVAYPASDCTIITHQEEELY</sequence>
<reference key="1">
    <citation type="journal article" date="2013" name="Proc. Natl. Acad. Sci. U.S.A.">
        <title>Improving the coverage of the cyanobacterial phylum using diversity-driven genome sequencing.</title>
        <authorList>
            <person name="Shih P.M."/>
            <person name="Wu D."/>
            <person name="Latifi A."/>
            <person name="Axen S.D."/>
            <person name="Fewer D.P."/>
            <person name="Talla E."/>
            <person name="Calteau A."/>
            <person name="Cai F."/>
            <person name="Tandeau de Marsac N."/>
            <person name="Rippka R."/>
            <person name="Herdman M."/>
            <person name="Sivonen K."/>
            <person name="Coursin T."/>
            <person name="Laurent T."/>
            <person name="Goodwin L."/>
            <person name="Nolan M."/>
            <person name="Davenport K.W."/>
            <person name="Han C.S."/>
            <person name="Rubin E.M."/>
            <person name="Eisen J.A."/>
            <person name="Woyke T."/>
            <person name="Gugger M."/>
            <person name="Kerfeld C.A."/>
        </authorList>
    </citation>
    <scope>NUCLEOTIDE SEQUENCE [LARGE SCALE GENOMIC DNA]</scope>
    <source>
        <strain>PCC 7418</strain>
    </source>
</reference>
<reference key="2">
    <citation type="journal article" date="1983" name="J. Biochem.">
        <title>Ferredoxin from Aphanothece halophitica, a unicellular blue-green alga: close relationship to ferredoxins from filamentous blue-green algae and phylogenetic implications.</title>
        <authorList>
            <person name="Hase T."/>
            <person name="Inoue K."/>
            <person name="Hagihara N."/>
            <person name="Matsubara H."/>
            <person name="Williams M.M."/>
            <person name="Rogers L.J."/>
        </authorList>
    </citation>
    <scope>PROTEIN SEQUENCE OF 2-99</scope>
</reference>
<evidence type="ECO:0000255" key="1">
    <source>
        <dbReference type="PROSITE-ProRule" id="PRU00465"/>
    </source>
</evidence>
<evidence type="ECO:0000269" key="2">
    <source>
    </source>
</evidence>
<evidence type="ECO:0000305" key="3"/>
<gene>
    <name type="ordered locus">PCC7418_2938</name>
</gene>
<protein>
    <recommendedName>
        <fullName>Ferredoxin</fullName>
    </recommendedName>
</protein>
<proteinExistence type="evidence at protein level"/>
<organism>
    <name type="scientific">Halothece sp. (strain PCC 7418)</name>
    <name type="common">Synechococcus sp. (strain PCC 7418)</name>
    <dbReference type="NCBI Taxonomy" id="65093"/>
    <lineage>
        <taxon>Bacteria</taxon>
        <taxon>Bacillati</taxon>
        <taxon>Cyanobacteriota</taxon>
        <taxon>Cyanophyceae</taxon>
        <taxon>Oscillatoriophycideae</taxon>
        <taxon>Chroococcales</taxon>
        <taxon>Halothecacae</taxon>
        <taxon>Halothece cluster</taxon>
        <taxon>Halothece</taxon>
    </lineage>
</organism>
<comment type="function">
    <text>Ferredoxins are iron-sulfur proteins that transfer electrons in a wide variety of metabolic reactions.</text>
</comment>
<comment type="cofactor">
    <cofactor>
        <name>[2Fe-2S] cluster</name>
        <dbReference type="ChEBI" id="CHEBI:190135"/>
    </cofactor>
    <text>Binds 1 [2Fe-2S] cluster.</text>
</comment>
<comment type="similarity">
    <text evidence="3">Belongs to the 2Fe2S plant-type ferredoxin family.</text>
</comment>
<keyword id="KW-0001">2Fe-2S</keyword>
<keyword id="KW-0903">Direct protein sequencing</keyword>
<keyword id="KW-0249">Electron transport</keyword>
<keyword id="KW-0408">Iron</keyword>
<keyword id="KW-0411">Iron-sulfur</keyword>
<keyword id="KW-0479">Metal-binding</keyword>
<keyword id="KW-1185">Reference proteome</keyword>
<keyword id="KW-0813">Transport</keyword>
<name>FER_HALP7</name>
<dbReference type="EMBL" id="CP003945">
    <property type="protein sequence ID" value="AFZ45067.1"/>
    <property type="molecule type" value="Genomic_DNA"/>
</dbReference>
<dbReference type="RefSeq" id="WP_015226940.1">
    <property type="nucleotide sequence ID" value="NC_019779.1"/>
</dbReference>
<dbReference type="SMR" id="P15788"/>
<dbReference type="STRING" id="65093.PCC7418_2938"/>
<dbReference type="KEGG" id="hao:PCC7418_2938"/>
<dbReference type="PATRIC" id="fig|65093.3.peg.3103"/>
<dbReference type="eggNOG" id="COG0633">
    <property type="taxonomic scope" value="Bacteria"/>
</dbReference>
<dbReference type="HOGENOM" id="CLU_082632_7_3_3"/>
<dbReference type="OrthoDB" id="462043at2"/>
<dbReference type="Proteomes" id="UP000010481">
    <property type="component" value="Chromosome"/>
</dbReference>
<dbReference type="GO" id="GO:0051537">
    <property type="term" value="F:2 iron, 2 sulfur cluster binding"/>
    <property type="evidence" value="ECO:0007669"/>
    <property type="project" value="UniProtKB-KW"/>
</dbReference>
<dbReference type="GO" id="GO:0009055">
    <property type="term" value="F:electron transfer activity"/>
    <property type="evidence" value="ECO:0007669"/>
    <property type="project" value="InterPro"/>
</dbReference>
<dbReference type="GO" id="GO:0046872">
    <property type="term" value="F:metal ion binding"/>
    <property type="evidence" value="ECO:0007669"/>
    <property type="project" value="UniProtKB-KW"/>
</dbReference>
<dbReference type="GO" id="GO:0022900">
    <property type="term" value="P:electron transport chain"/>
    <property type="evidence" value="ECO:0007669"/>
    <property type="project" value="InterPro"/>
</dbReference>
<dbReference type="CDD" id="cd00207">
    <property type="entry name" value="fer2"/>
    <property type="match status" value="1"/>
</dbReference>
<dbReference type="FunFam" id="3.10.20.30:FF:000014">
    <property type="entry name" value="Ferredoxin"/>
    <property type="match status" value="1"/>
</dbReference>
<dbReference type="Gene3D" id="3.10.20.30">
    <property type="match status" value="1"/>
</dbReference>
<dbReference type="InterPro" id="IPR036010">
    <property type="entry name" value="2Fe-2S_ferredoxin-like_sf"/>
</dbReference>
<dbReference type="InterPro" id="IPR001041">
    <property type="entry name" value="2Fe-2S_ferredoxin-type"/>
</dbReference>
<dbReference type="InterPro" id="IPR006058">
    <property type="entry name" value="2Fe2S_fd_BS"/>
</dbReference>
<dbReference type="InterPro" id="IPR012675">
    <property type="entry name" value="Beta-grasp_dom_sf"/>
</dbReference>
<dbReference type="InterPro" id="IPR010241">
    <property type="entry name" value="Fd_pln"/>
</dbReference>
<dbReference type="NCBIfam" id="TIGR02008">
    <property type="entry name" value="fdx_plant"/>
    <property type="match status" value="1"/>
</dbReference>
<dbReference type="PANTHER" id="PTHR43112">
    <property type="entry name" value="FERREDOXIN"/>
    <property type="match status" value="1"/>
</dbReference>
<dbReference type="PANTHER" id="PTHR43112:SF3">
    <property type="entry name" value="FERREDOXIN-2, CHLOROPLASTIC"/>
    <property type="match status" value="1"/>
</dbReference>
<dbReference type="Pfam" id="PF00111">
    <property type="entry name" value="Fer2"/>
    <property type="match status" value="1"/>
</dbReference>
<dbReference type="SUPFAM" id="SSF54292">
    <property type="entry name" value="2Fe-2S ferredoxin-like"/>
    <property type="match status" value="1"/>
</dbReference>
<dbReference type="PROSITE" id="PS00197">
    <property type="entry name" value="2FE2S_FER_1"/>
    <property type="match status" value="1"/>
</dbReference>
<dbReference type="PROSITE" id="PS51085">
    <property type="entry name" value="2FE2S_FER_2"/>
    <property type="match status" value="1"/>
</dbReference>
<accession>P15788</accession>
<accession>K9YF07</accession>
<feature type="initiator methionine" description="Removed" evidence="2">
    <location>
        <position position="1"/>
    </location>
</feature>
<feature type="chain" id="PRO_0000189377" description="Ferredoxin">
    <location>
        <begin position="2"/>
        <end position="99"/>
    </location>
</feature>
<feature type="domain" description="2Fe-2S ferredoxin-type" evidence="1">
    <location>
        <begin position="4"/>
        <end position="96"/>
    </location>
</feature>
<feature type="binding site">
    <location>
        <position position="42"/>
    </location>
    <ligand>
        <name>[2Fe-2S] cluster</name>
        <dbReference type="ChEBI" id="CHEBI:190135"/>
    </ligand>
</feature>
<feature type="binding site">
    <location>
        <position position="47"/>
    </location>
    <ligand>
        <name>[2Fe-2S] cluster</name>
        <dbReference type="ChEBI" id="CHEBI:190135"/>
    </ligand>
</feature>
<feature type="binding site">
    <location>
        <position position="50"/>
    </location>
    <ligand>
        <name>[2Fe-2S] cluster</name>
        <dbReference type="ChEBI" id="CHEBI:190135"/>
    </ligand>
</feature>
<feature type="binding site">
    <location>
        <position position="80"/>
    </location>
    <ligand>
        <name>[2Fe-2S] cluster</name>
        <dbReference type="ChEBI" id="CHEBI:190135"/>
    </ligand>
</feature>